<proteinExistence type="evidence at protein level"/>
<comment type="function">
    <text>Pulmonary surfactant associated proteins promote alveolar stability by lowering the surface tension at the air-liquid interface in the peripheral air spaces.</text>
</comment>
<comment type="subcellular location">
    <subcellularLocation>
        <location>Secreted</location>
        <location>Extracellular space</location>
        <location>Surface film</location>
    </subcellularLocation>
</comment>
<comment type="miscellaneous">
    <text>Pulmonary surfactant consists of 90% lipid and 10% protein. There are 4 surfactant-associated proteins: 2 collagenous, carbohydrate-binding glycoproteins (SP-A and SP-D) and 2 small hydrophobic proteins (SP-B and SP-C).</text>
</comment>
<sequence>MDVGSKEVLMESPPDYTAVPGGRLLIPCCPVNIKRLLIVVVVVVLVVVVIVGALLMGLHMSQKHTEMVLEMSITGPEAQQRLALSERVGTTATFSIGSTGTVVYDYQRLLIAYKPAPGTCCYIMKMAPQNIPSLEALTRKLQNFQAKPQVPSSKLGQEQGHDAGSAFSGDLAFLGRTVSTLCGEVPLYYT</sequence>
<dbReference type="EMBL" id="AF250035">
    <property type="protein sequence ID" value="AAK28414.1"/>
    <property type="molecule type" value="mRNA"/>
</dbReference>
<dbReference type="EMBL" id="BC123536">
    <property type="protein sequence ID" value="AAI23537.1"/>
    <property type="molecule type" value="mRNA"/>
</dbReference>
<dbReference type="PIR" id="S00609">
    <property type="entry name" value="LNBOC1"/>
</dbReference>
<dbReference type="RefSeq" id="NP_776887.1">
    <property type="nucleotide sequence ID" value="NM_174462.4"/>
</dbReference>
<dbReference type="SMR" id="P15783"/>
<dbReference type="FunCoup" id="P15783">
    <property type="interactions" value="22"/>
</dbReference>
<dbReference type="STRING" id="9913.ENSBTAP00000016672"/>
<dbReference type="SwissPalm" id="P15783"/>
<dbReference type="PaxDb" id="9913-ENSBTAP00000016672"/>
<dbReference type="GeneID" id="282071"/>
<dbReference type="KEGG" id="bta:282071"/>
<dbReference type="CTD" id="6440"/>
<dbReference type="eggNOG" id="ENOG502S6QH">
    <property type="taxonomic scope" value="Eukaryota"/>
</dbReference>
<dbReference type="HOGENOM" id="CLU_087015_0_0_1"/>
<dbReference type="InParanoid" id="P15783"/>
<dbReference type="OrthoDB" id="9888901at2759"/>
<dbReference type="TreeFam" id="TF337317"/>
<dbReference type="Proteomes" id="UP000009136">
    <property type="component" value="Unplaced"/>
</dbReference>
<dbReference type="GO" id="GO:0097208">
    <property type="term" value="C:alveolar lamellar body"/>
    <property type="evidence" value="ECO:0000318"/>
    <property type="project" value="GO_Central"/>
</dbReference>
<dbReference type="GO" id="GO:0005615">
    <property type="term" value="C:extracellular space"/>
    <property type="evidence" value="ECO:0000318"/>
    <property type="project" value="GO_Central"/>
</dbReference>
<dbReference type="GO" id="GO:0007585">
    <property type="term" value="P:respiratory gaseous exchange by respiratory system"/>
    <property type="evidence" value="ECO:0007669"/>
    <property type="project" value="UniProtKB-KW"/>
</dbReference>
<dbReference type="Gene3D" id="3.30.390.150">
    <property type="match status" value="1"/>
</dbReference>
<dbReference type="InterPro" id="IPR007084">
    <property type="entry name" value="BRICHOS_dom"/>
</dbReference>
<dbReference type="InterPro" id="IPR001729">
    <property type="entry name" value="SP-C"/>
</dbReference>
<dbReference type="InterPro" id="IPR018051">
    <property type="entry name" value="SP-C_palmitoylation_site"/>
</dbReference>
<dbReference type="InterPro" id="IPR015091">
    <property type="entry name" value="Surfactant_protein_propep"/>
</dbReference>
<dbReference type="PANTHER" id="PTHR10800">
    <property type="entry name" value="PULMONARY SURFACTANT-ASSOCIATED PROTEIN C"/>
    <property type="match status" value="1"/>
</dbReference>
<dbReference type="PANTHER" id="PTHR10800:SF4">
    <property type="entry name" value="PULMONARY SURFACTANT-ASSOCIATED PROTEIN C"/>
    <property type="match status" value="1"/>
</dbReference>
<dbReference type="Pfam" id="PF04089">
    <property type="entry name" value="BRICHOS"/>
    <property type="match status" value="1"/>
</dbReference>
<dbReference type="Pfam" id="PF08999">
    <property type="entry name" value="SP_C-Propep"/>
    <property type="match status" value="1"/>
</dbReference>
<dbReference type="SMART" id="SM01039">
    <property type="entry name" value="BRICHOS"/>
    <property type="match status" value="1"/>
</dbReference>
<dbReference type="SMART" id="SM00019">
    <property type="entry name" value="SF_P"/>
    <property type="match status" value="1"/>
</dbReference>
<dbReference type="PROSITE" id="PS50869">
    <property type="entry name" value="BRICHOS"/>
    <property type="match status" value="1"/>
</dbReference>
<dbReference type="PROSITE" id="PS00341">
    <property type="entry name" value="SURFACT_PALMITOYL"/>
    <property type="match status" value="1"/>
</dbReference>
<reference key="1">
    <citation type="submission" date="2000-03" db="EMBL/GenBank/DDBJ databases">
        <title>cDNA cloning of bovine (Belgian White and Blue breed) pulmonary surfactant-associated protein C.</title>
        <authorList>
            <person name="Danlois F."/>
            <person name="Vandenbussche G."/>
            <person name="Ruysschaert J.-M."/>
        </authorList>
    </citation>
    <scope>NUCLEOTIDE SEQUENCE [MRNA]</scope>
    <source>
        <strain>Belgian blue</strain>
        <tissue>Lung</tissue>
    </source>
</reference>
<reference key="2">
    <citation type="submission" date="2006-09" db="EMBL/GenBank/DDBJ databases">
        <authorList>
            <consortium name="NIH - Mammalian Gene Collection (MGC) project"/>
        </authorList>
    </citation>
    <scope>NUCLEOTIDE SEQUENCE [LARGE SCALE MRNA]</scope>
    <source>
        <strain>Hereford</strain>
        <tissue>Fetal lung</tissue>
    </source>
</reference>
<reference key="3">
    <citation type="journal article" date="1988" name="FEBS Lett.">
        <title>Hydrophobic 3.7 kDa surfactant polypeptide: structural characterization of the human and bovine forms.</title>
        <authorList>
            <person name="Johansson J."/>
            <person name="Joernvall H."/>
            <person name="Eklund A."/>
            <person name="Christensen N."/>
            <person name="Robertson B."/>
            <person name="Curstedt T."/>
        </authorList>
    </citation>
    <scope>PROTEIN SEQUENCE OF 25-58</scope>
</reference>
<reference key="4">
    <citation type="journal article" date="1987" name="Biochem. Biophys. Res. Commun.">
        <title>Protein sequence analysis studies on the low molecular weight hydrophobic proteins associated with bovine pulmonary surfactant.</title>
        <authorList>
            <person name="Olafson R.W."/>
            <person name="Rink U."/>
            <person name="Kielland S."/>
            <person name="Yu S.-H."/>
            <person name="Chung J."/>
            <person name="Harding P.G.R."/>
            <person name="Possmayer F."/>
        </authorList>
    </citation>
    <scope>PROTEIN SEQUENCE OF 25-58</scope>
</reference>
<reference key="5">
    <citation type="journal article" date="1987" name="Biochim. Biophys. Acta">
        <title>Characterization of the small hydrophobic proteins associated with pulmonary surfactant.</title>
        <authorList>
            <person name="Yu S.-H."/>
            <person name="Chung W."/>
            <person name="Olafson R.W."/>
            <person name="Harding P.G.R."/>
            <person name="Possmayer F."/>
        </authorList>
    </citation>
    <scope>PROTEIN SEQUENCE OF 25-34</scope>
</reference>
<reference key="6">
    <citation type="journal article" date="1991" name="Am. J. Physiol.">
        <title>Lung surfactant protein SP-C from human, bovine, and canine sources contains palmityl cysteine thioester linkages.</title>
        <authorList>
            <person name="Stults J.T."/>
            <person name="Griffin P.R."/>
            <person name="Lesikar D.D."/>
            <person name="Naidu A."/>
            <person name="Moffat B."/>
            <person name="Benson B.J."/>
        </authorList>
    </citation>
    <scope>PALMITOYLATION AT CYS-28 AND CYS-29</scope>
</reference>
<protein>
    <recommendedName>
        <fullName evidence="2">Surfactant protein C</fullName>
        <shortName>SP-C</shortName>
    </recommendedName>
    <alternativeName>
        <fullName>Pulmonary surfactant-associated protein C</fullName>
    </alternativeName>
    <alternativeName>
        <fullName>Pulmonary surfactant-associated proteolipid SPL(Val)</fullName>
    </alternativeName>
</protein>
<keyword id="KW-0903">Direct protein sequencing</keyword>
<keyword id="KW-1015">Disulfide bond</keyword>
<keyword id="KW-0305">Gaseous exchange</keyword>
<keyword id="KW-0449">Lipoprotein</keyword>
<keyword id="KW-0564">Palmitate</keyword>
<keyword id="KW-1185">Reference proteome</keyword>
<keyword id="KW-0964">Secreted</keyword>
<keyword id="KW-0767">Surface film</keyword>
<evidence type="ECO:0000250" key="1"/>
<evidence type="ECO:0000250" key="2">
    <source>
        <dbReference type="UniProtKB" id="P11686"/>
    </source>
</evidence>
<evidence type="ECO:0000255" key="3">
    <source>
        <dbReference type="PROSITE-ProRule" id="PRU00255"/>
    </source>
</evidence>
<evidence type="ECO:0000269" key="4">
    <source>
    </source>
</evidence>
<evidence type="ECO:0000305" key="5"/>
<name>PSPC_BOVIN</name>
<feature type="propeptide" id="PRO_0000244397">
    <location>
        <begin position="1"/>
        <end position="24"/>
    </location>
</feature>
<feature type="chain" id="PRO_0000183013" description="Surfactant protein C">
    <location>
        <begin position="25"/>
        <end position="58"/>
    </location>
</feature>
<feature type="propeptide" id="PRO_0000244398">
    <location>
        <begin position="59"/>
        <end position="190"/>
    </location>
</feature>
<feature type="domain" description="BRICHOS" evidence="3">
    <location>
        <begin position="94"/>
        <end position="190"/>
    </location>
</feature>
<feature type="lipid moiety-binding region" description="S-palmitoyl cysteine" evidence="4">
    <location>
        <position position="28"/>
    </location>
</feature>
<feature type="lipid moiety-binding region" description="S-palmitoyl cysteine" evidence="4">
    <location>
        <position position="29"/>
    </location>
</feature>
<feature type="disulfide bond" evidence="1">
    <location>
        <begin position="121"/>
        <end position="182"/>
    </location>
</feature>
<feature type="sequence conflict" description="In Ref. 4; AA sequence." evidence="5" ref="4">
    <original>L</original>
    <variation>V</variation>
    <location>
        <position position="45"/>
    </location>
</feature>
<feature type="sequence conflict" description="In Ref. 3; AA sequence and 4; AA sequence." evidence="5" ref="3 4">
    <original>V</original>
    <variation>L</variation>
    <location>
        <position position="46"/>
    </location>
</feature>
<feature type="sequence conflict" description="In Ref. 4; AA sequence." evidence="5" ref="4">
    <original>I</original>
    <variation>V</variation>
    <location>
        <position position="50"/>
    </location>
</feature>
<feature type="sequence conflict" description="In Ref. 4; AA sequence." evidence="5" ref="4">
    <original>GALLMGL</original>
    <variation>IGAMLAM</variation>
    <location>
        <begin position="52"/>
        <end position="58"/>
    </location>
</feature>
<accession>P15783</accession>
<accession>A4FV06</accession>
<accession>P15784</accession>
<accession>Q9BDX5</accession>
<gene>
    <name type="primary">SFTPC</name>
    <name type="synonym">SFTP2</name>
</gene>
<organism>
    <name type="scientific">Bos taurus</name>
    <name type="common">Bovine</name>
    <dbReference type="NCBI Taxonomy" id="9913"/>
    <lineage>
        <taxon>Eukaryota</taxon>
        <taxon>Metazoa</taxon>
        <taxon>Chordata</taxon>
        <taxon>Craniata</taxon>
        <taxon>Vertebrata</taxon>
        <taxon>Euteleostomi</taxon>
        <taxon>Mammalia</taxon>
        <taxon>Eutheria</taxon>
        <taxon>Laurasiatheria</taxon>
        <taxon>Artiodactyla</taxon>
        <taxon>Ruminantia</taxon>
        <taxon>Pecora</taxon>
        <taxon>Bovidae</taxon>
        <taxon>Bovinae</taxon>
        <taxon>Bos</taxon>
    </lineage>
</organism>